<reference key="1">
    <citation type="journal article" date="2009" name="J. Bacteriol.">
        <title>Genome sequences of three Agrobacterium biovars help elucidate the evolution of multichromosome genomes in bacteria.</title>
        <authorList>
            <person name="Slater S.C."/>
            <person name="Goldman B.S."/>
            <person name="Goodner B."/>
            <person name="Setubal J.C."/>
            <person name="Farrand S.K."/>
            <person name="Nester E.W."/>
            <person name="Burr T.J."/>
            <person name="Banta L."/>
            <person name="Dickerman A.W."/>
            <person name="Paulsen I."/>
            <person name="Otten L."/>
            <person name="Suen G."/>
            <person name="Welch R."/>
            <person name="Almeida N.F."/>
            <person name="Arnold F."/>
            <person name="Burton O.T."/>
            <person name="Du Z."/>
            <person name="Ewing A."/>
            <person name="Godsy E."/>
            <person name="Heisel S."/>
            <person name="Houmiel K.L."/>
            <person name="Jhaveri J."/>
            <person name="Lu J."/>
            <person name="Miller N.M."/>
            <person name="Norton S."/>
            <person name="Chen Q."/>
            <person name="Phoolcharoen W."/>
            <person name="Ohlin V."/>
            <person name="Ondrusek D."/>
            <person name="Pride N."/>
            <person name="Stricklin S.L."/>
            <person name="Sun J."/>
            <person name="Wheeler C."/>
            <person name="Wilson L."/>
            <person name="Zhu H."/>
            <person name="Wood D.W."/>
        </authorList>
    </citation>
    <scope>NUCLEOTIDE SEQUENCE [LARGE SCALE GENOMIC DNA]</scope>
    <source>
        <strain>ATCC BAA-846 / DSM 112012 / S4</strain>
    </source>
</reference>
<evidence type="ECO:0000255" key="1">
    <source>
        <dbReference type="HAMAP-Rule" id="MF_00033"/>
    </source>
</evidence>
<feature type="chain" id="PRO_1000117000" description="UDP-N-acetylglucosamine--N-acetylmuramyl-(pentapeptide) pyrophosphoryl-undecaprenol N-acetylglucosamine transferase">
    <location>
        <begin position="1"/>
        <end position="373"/>
    </location>
</feature>
<feature type="binding site" evidence="1">
    <location>
        <begin position="13"/>
        <end position="15"/>
    </location>
    <ligand>
        <name>UDP-N-acetyl-alpha-D-glucosamine</name>
        <dbReference type="ChEBI" id="CHEBI:57705"/>
    </ligand>
</feature>
<feature type="binding site" evidence="1">
    <location>
        <position position="124"/>
    </location>
    <ligand>
        <name>UDP-N-acetyl-alpha-D-glucosamine</name>
        <dbReference type="ChEBI" id="CHEBI:57705"/>
    </ligand>
</feature>
<feature type="binding site" evidence="1">
    <location>
        <position position="164"/>
    </location>
    <ligand>
        <name>UDP-N-acetyl-alpha-D-glucosamine</name>
        <dbReference type="ChEBI" id="CHEBI:57705"/>
    </ligand>
</feature>
<feature type="binding site" evidence="1">
    <location>
        <position position="192"/>
    </location>
    <ligand>
        <name>UDP-N-acetyl-alpha-D-glucosamine</name>
        <dbReference type="ChEBI" id="CHEBI:57705"/>
    </ligand>
</feature>
<feature type="binding site" evidence="1">
    <location>
        <position position="293"/>
    </location>
    <ligand>
        <name>UDP-N-acetyl-alpha-D-glucosamine</name>
        <dbReference type="ChEBI" id="CHEBI:57705"/>
    </ligand>
</feature>
<organism>
    <name type="scientific">Allorhizobium ampelinum (strain ATCC BAA-846 / DSM 112012 / S4)</name>
    <name type="common">Agrobacterium vitis (strain S4)</name>
    <dbReference type="NCBI Taxonomy" id="311402"/>
    <lineage>
        <taxon>Bacteria</taxon>
        <taxon>Pseudomonadati</taxon>
        <taxon>Pseudomonadota</taxon>
        <taxon>Alphaproteobacteria</taxon>
        <taxon>Hyphomicrobiales</taxon>
        <taxon>Rhizobiaceae</taxon>
        <taxon>Rhizobium/Agrobacterium group</taxon>
        <taxon>Allorhizobium</taxon>
        <taxon>Allorhizobium ampelinum</taxon>
    </lineage>
</organism>
<protein>
    <recommendedName>
        <fullName evidence="1">UDP-N-acetylglucosamine--N-acetylmuramyl-(pentapeptide) pyrophosphoryl-undecaprenol N-acetylglucosamine transferase</fullName>
        <ecNumber evidence="1">2.4.1.227</ecNumber>
    </recommendedName>
    <alternativeName>
        <fullName evidence="1">Undecaprenyl-PP-MurNAc-pentapeptide-UDPGlcNAc GlcNAc transferase</fullName>
    </alternativeName>
</protein>
<keyword id="KW-0131">Cell cycle</keyword>
<keyword id="KW-0132">Cell division</keyword>
<keyword id="KW-0997">Cell inner membrane</keyword>
<keyword id="KW-1003">Cell membrane</keyword>
<keyword id="KW-0133">Cell shape</keyword>
<keyword id="KW-0961">Cell wall biogenesis/degradation</keyword>
<keyword id="KW-0328">Glycosyltransferase</keyword>
<keyword id="KW-0472">Membrane</keyword>
<keyword id="KW-0573">Peptidoglycan synthesis</keyword>
<keyword id="KW-1185">Reference proteome</keyword>
<keyword id="KW-0808">Transferase</keyword>
<accession>B9JY54</accession>
<name>MURG_ALLAM</name>
<dbReference type="EC" id="2.4.1.227" evidence="1"/>
<dbReference type="EMBL" id="CP000633">
    <property type="protein sequence ID" value="ACM37084.1"/>
    <property type="molecule type" value="Genomic_DNA"/>
</dbReference>
<dbReference type="RefSeq" id="WP_015916505.1">
    <property type="nucleotide sequence ID" value="NC_011989.1"/>
</dbReference>
<dbReference type="SMR" id="B9JY54"/>
<dbReference type="STRING" id="311402.Avi_2891"/>
<dbReference type="CAZy" id="GT28">
    <property type="family name" value="Glycosyltransferase Family 28"/>
</dbReference>
<dbReference type="KEGG" id="avi:Avi_2891"/>
<dbReference type="eggNOG" id="COG0707">
    <property type="taxonomic scope" value="Bacteria"/>
</dbReference>
<dbReference type="HOGENOM" id="CLU_037404_2_1_5"/>
<dbReference type="UniPathway" id="UPA00219"/>
<dbReference type="Proteomes" id="UP000001596">
    <property type="component" value="Chromosome 1"/>
</dbReference>
<dbReference type="GO" id="GO:0005886">
    <property type="term" value="C:plasma membrane"/>
    <property type="evidence" value="ECO:0007669"/>
    <property type="project" value="UniProtKB-SubCell"/>
</dbReference>
<dbReference type="GO" id="GO:0051991">
    <property type="term" value="F:UDP-N-acetyl-D-glucosamine:N-acetylmuramoyl-L-alanyl-D-glutamyl-meso-2,6-diaminopimelyl-D-alanyl-D-alanine-diphosphoundecaprenol 4-beta-N-acetylglucosaminlytransferase activity"/>
    <property type="evidence" value="ECO:0007669"/>
    <property type="project" value="RHEA"/>
</dbReference>
<dbReference type="GO" id="GO:0050511">
    <property type="term" value="F:undecaprenyldiphospho-muramoylpentapeptide beta-N-acetylglucosaminyltransferase activity"/>
    <property type="evidence" value="ECO:0007669"/>
    <property type="project" value="UniProtKB-UniRule"/>
</dbReference>
<dbReference type="GO" id="GO:0005975">
    <property type="term" value="P:carbohydrate metabolic process"/>
    <property type="evidence" value="ECO:0007669"/>
    <property type="project" value="InterPro"/>
</dbReference>
<dbReference type="GO" id="GO:0051301">
    <property type="term" value="P:cell division"/>
    <property type="evidence" value="ECO:0007669"/>
    <property type="project" value="UniProtKB-KW"/>
</dbReference>
<dbReference type="GO" id="GO:0071555">
    <property type="term" value="P:cell wall organization"/>
    <property type="evidence" value="ECO:0007669"/>
    <property type="project" value="UniProtKB-KW"/>
</dbReference>
<dbReference type="GO" id="GO:0030259">
    <property type="term" value="P:lipid glycosylation"/>
    <property type="evidence" value="ECO:0007669"/>
    <property type="project" value="UniProtKB-UniRule"/>
</dbReference>
<dbReference type="GO" id="GO:0009252">
    <property type="term" value="P:peptidoglycan biosynthetic process"/>
    <property type="evidence" value="ECO:0007669"/>
    <property type="project" value="UniProtKB-UniRule"/>
</dbReference>
<dbReference type="GO" id="GO:0008360">
    <property type="term" value="P:regulation of cell shape"/>
    <property type="evidence" value="ECO:0007669"/>
    <property type="project" value="UniProtKB-KW"/>
</dbReference>
<dbReference type="CDD" id="cd03785">
    <property type="entry name" value="GT28_MurG"/>
    <property type="match status" value="1"/>
</dbReference>
<dbReference type="Gene3D" id="3.40.50.2000">
    <property type="entry name" value="Glycogen Phosphorylase B"/>
    <property type="match status" value="2"/>
</dbReference>
<dbReference type="HAMAP" id="MF_00033">
    <property type="entry name" value="MurG"/>
    <property type="match status" value="1"/>
</dbReference>
<dbReference type="InterPro" id="IPR006009">
    <property type="entry name" value="GlcNAc_MurG"/>
</dbReference>
<dbReference type="InterPro" id="IPR007235">
    <property type="entry name" value="Glyco_trans_28_C"/>
</dbReference>
<dbReference type="InterPro" id="IPR004276">
    <property type="entry name" value="GlycoTrans_28_N"/>
</dbReference>
<dbReference type="NCBIfam" id="TIGR01133">
    <property type="entry name" value="murG"/>
    <property type="match status" value="1"/>
</dbReference>
<dbReference type="PANTHER" id="PTHR21015:SF22">
    <property type="entry name" value="GLYCOSYLTRANSFERASE"/>
    <property type="match status" value="1"/>
</dbReference>
<dbReference type="PANTHER" id="PTHR21015">
    <property type="entry name" value="UDP-N-ACETYLGLUCOSAMINE--N-ACETYLMURAMYL-(PENTAPEPTIDE) PYROPHOSPHORYL-UNDECAPRENOL N-ACETYLGLUCOSAMINE TRANSFERASE 1"/>
    <property type="match status" value="1"/>
</dbReference>
<dbReference type="Pfam" id="PF04101">
    <property type="entry name" value="Glyco_tran_28_C"/>
    <property type="match status" value="1"/>
</dbReference>
<dbReference type="Pfam" id="PF03033">
    <property type="entry name" value="Glyco_transf_28"/>
    <property type="match status" value="1"/>
</dbReference>
<dbReference type="SUPFAM" id="SSF53756">
    <property type="entry name" value="UDP-Glycosyltransferase/glycogen phosphorylase"/>
    <property type="match status" value="1"/>
</dbReference>
<proteinExistence type="inferred from homology"/>
<gene>
    <name evidence="1" type="primary">murG</name>
    <name type="ordered locus">Avi_2891</name>
</gene>
<comment type="function">
    <text evidence="1">Cell wall formation. Catalyzes the transfer of a GlcNAc subunit on undecaprenyl-pyrophosphoryl-MurNAc-pentapeptide (lipid intermediate I) to form undecaprenyl-pyrophosphoryl-MurNAc-(pentapeptide)GlcNAc (lipid intermediate II).</text>
</comment>
<comment type="catalytic activity">
    <reaction evidence="1">
        <text>di-trans,octa-cis-undecaprenyl diphospho-N-acetyl-alpha-D-muramoyl-L-alanyl-D-glutamyl-meso-2,6-diaminopimeloyl-D-alanyl-D-alanine + UDP-N-acetyl-alpha-D-glucosamine = di-trans,octa-cis-undecaprenyl diphospho-[N-acetyl-alpha-D-glucosaminyl-(1-&gt;4)]-N-acetyl-alpha-D-muramoyl-L-alanyl-D-glutamyl-meso-2,6-diaminopimeloyl-D-alanyl-D-alanine + UDP + H(+)</text>
        <dbReference type="Rhea" id="RHEA:31227"/>
        <dbReference type="ChEBI" id="CHEBI:15378"/>
        <dbReference type="ChEBI" id="CHEBI:57705"/>
        <dbReference type="ChEBI" id="CHEBI:58223"/>
        <dbReference type="ChEBI" id="CHEBI:61387"/>
        <dbReference type="ChEBI" id="CHEBI:61388"/>
        <dbReference type="EC" id="2.4.1.227"/>
    </reaction>
</comment>
<comment type="pathway">
    <text evidence="1">Cell wall biogenesis; peptidoglycan biosynthesis.</text>
</comment>
<comment type="subcellular location">
    <subcellularLocation>
        <location evidence="1">Cell inner membrane</location>
        <topology evidence="1">Peripheral membrane protein</topology>
        <orientation evidence="1">Cytoplasmic side</orientation>
    </subcellularLocation>
</comment>
<comment type="similarity">
    <text evidence="1">Belongs to the glycosyltransferase 28 family. MurG subfamily.</text>
</comment>
<sequence length="373" mass="38760">MTKGLILLAAGGTGGHLFPAEALAHELRARGYSVHLVTDSRAERYAGKFPADAIHVVPSATIGSKNPVAIAKALLTLWRGYRAARSLIAGLKPLVVIGFGGYPTIPPLLAARALGVATVIHEQNAVMGRANRFLAPRVKAIAGGFLPAGGAYADKTVVTGNPVRPAVLAASETDYQPSGDGDPFELVVFGGSQGAQHFSNAVPSAICILDDVLRARLRITQQARPEDADRVKALYEKLKVPASVSPFFGDMAERIATSQMVISRSGASTVSELGVIGRPAVLVPYPYALDHDQAANAAAISGQGGAVVVPQSDLTPEKLSALLKDWMTSPAKLAQMAASARSAGQPEAAGLLADLVQTIAEGKNLKTLKDVKA</sequence>